<keyword id="KW-1185">Reference proteome</keyword>
<sequence length="63" mass="6738">MIIDSITKLNFKNKSSSSSVITVKTSTSPQIIFGDNKFTGGVNKQKGFDSVSPTLKGKGILFV</sequence>
<dbReference type="EMBL" id="AAFI02000172">
    <property type="protein sequence ID" value="EAL61969.1"/>
    <property type="molecule type" value="Genomic_DNA"/>
</dbReference>
<dbReference type="RefSeq" id="XP_635473.1">
    <property type="nucleotide sequence ID" value="XM_630381.1"/>
</dbReference>
<dbReference type="PaxDb" id="44689-DDB0189145"/>
<dbReference type="EnsemblProtists" id="EAL61969">
    <property type="protein sequence ID" value="EAL61969"/>
    <property type="gene ID" value="DDB_G0290907"/>
</dbReference>
<dbReference type="GeneID" id="8627889"/>
<dbReference type="KEGG" id="ddi:DDB_G0290907"/>
<dbReference type="dictyBase" id="DDB_G0290907"/>
<dbReference type="VEuPathDB" id="AmoebaDB:DDB_G0290907"/>
<dbReference type="HOGENOM" id="CLU_2890479_0_0_1"/>
<dbReference type="InParanoid" id="Q54FE9"/>
<dbReference type="PRO" id="PR:Q54FE9"/>
<dbReference type="Proteomes" id="UP000002195">
    <property type="component" value="Chromosome 5"/>
</dbReference>
<name>Y9145_DICDI</name>
<organism>
    <name type="scientific">Dictyostelium discoideum</name>
    <name type="common">Social amoeba</name>
    <dbReference type="NCBI Taxonomy" id="44689"/>
    <lineage>
        <taxon>Eukaryota</taxon>
        <taxon>Amoebozoa</taxon>
        <taxon>Evosea</taxon>
        <taxon>Eumycetozoa</taxon>
        <taxon>Dictyostelia</taxon>
        <taxon>Dictyosteliales</taxon>
        <taxon>Dictyosteliaceae</taxon>
        <taxon>Dictyostelium</taxon>
    </lineage>
</organism>
<reference key="1">
    <citation type="journal article" date="2005" name="Nature">
        <title>The genome of the social amoeba Dictyostelium discoideum.</title>
        <authorList>
            <person name="Eichinger L."/>
            <person name="Pachebat J.A."/>
            <person name="Gloeckner G."/>
            <person name="Rajandream M.A."/>
            <person name="Sucgang R."/>
            <person name="Berriman M."/>
            <person name="Song J."/>
            <person name="Olsen R."/>
            <person name="Szafranski K."/>
            <person name="Xu Q."/>
            <person name="Tunggal B."/>
            <person name="Kummerfeld S."/>
            <person name="Madera M."/>
            <person name="Konfortov B.A."/>
            <person name="Rivero F."/>
            <person name="Bankier A.T."/>
            <person name="Lehmann R."/>
            <person name="Hamlin N."/>
            <person name="Davies R."/>
            <person name="Gaudet P."/>
            <person name="Fey P."/>
            <person name="Pilcher K."/>
            <person name="Chen G."/>
            <person name="Saunders D."/>
            <person name="Sodergren E.J."/>
            <person name="Davis P."/>
            <person name="Kerhornou A."/>
            <person name="Nie X."/>
            <person name="Hall N."/>
            <person name="Anjard C."/>
            <person name="Hemphill L."/>
            <person name="Bason N."/>
            <person name="Farbrother P."/>
            <person name="Desany B."/>
            <person name="Just E."/>
            <person name="Morio T."/>
            <person name="Rost R."/>
            <person name="Churcher C.M."/>
            <person name="Cooper J."/>
            <person name="Haydock S."/>
            <person name="van Driessche N."/>
            <person name="Cronin A."/>
            <person name="Goodhead I."/>
            <person name="Muzny D.M."/>
            <person name="Mourier T."/>
            <person name="Pain A."/>
            <person name="Lu M."/>
            <person name="Harper D."/>
            <person name="Lindsay R."/>
            <person name="Hauser H."/>
            <person name="James K.D."/>
            <person name="Quiles M."/>
            <person name="Madan Babu M."/>
            <person name="Saito T."/>
            <person name="Buchrieser C."/>
            <person name="Wardroper A."/>
            <person name="Felder M."/>
            <person name="Thangavelu M."/>
            <person name="Johnson D."/>
            <person name="Knights A."/>
            <person name="Loulseged H."/>
            <person name="Mungall K.L."/>
            <person name="Oliver K."/>
            <person name="Price C."/>
            <person name="Quail M.A."/>
            <person name="Urushihara H."/>
            <person name="Hernandez J."/>
            <person name="Rabbinowitsch E."/>
            <person name="Steffen D."/>
            <person name="Sanders M."/>
            <person name="Ma J."/>
            <person name="Kohara Y."/>
            <person name="Sharp S."/>
            <person name="Simmonds M.N."/>
            <person name="Spiegler S."/>
            <person name="Tivey A."/>
            <person name="Sugano S."/>
            <person name="White B."/>
            <person name="Walker D."/>
            <person name="Woodward J.R."/>
            <person name="Winckler T."/>
            <person name="Tanaka Y."/>
            <person name="Shaulsky G."/>
            <person name="Schleicher M."/>
            <person name="Weinstock G.M."/>
            <person name="Rosenthal A."/>
            <person name="Cox E.C."/>
            <person name="Chisholm R.L."/>
            <person name="Gibbs R.A."/>
            <person name="Loomis W.F."/>
            <person name="Platzer M."/>
            <person name="Kay R.R."/>
            <person name="Williams J.G."/>
            <person name="Dear P.H."/>
            <person name="Noegel A.A."/>
            <person name="Barrell B.G."/>
            <person name="Kuspa A."/>
        </authorList>
    </citation>
    <scope>NUCLEOTIDE SEQUENCE [LARGE SCALE GENOMIC DNA]</scope>
    <source>
        <strain>AX4</strain>
    </source>
</reference>
<accession>Q54FE9</accession>
<protein>
    <recommendedName>
        <fullName>Putative uncharacterized protein DDB_G0290907</fullName>
    </recommendedName>
</protein>
<feature type="chain" id="PRO_0000346901" description="Putative uncharacterized protein DDB_G0290907">
    <location>
        <begin position="1"/>
        <end position="63"/>
    </location>
</feature>
<gene>
    <name type="ORF">DDB_G0290907</name>
</gene>
<proteinExistence type="predicted"/>